<organism>
    <name type="scientific">Nitratidesulfovibrio vulgaris (strain ATCC 29579 / DSM 644 / CCUG 34227 / NCIMB 8303 / VKM B-1760 / Hildenborough)</name>
    <name type="common">Desulfovibrio vulgaris</name>
    <dbReference type="NCBI Taxonomy" id="882"/>
    <lineage>
        <taxon>Bacteria</taxon>
        <taxon>Pseudomonadati</taxon>
        <taxon>Thermodesulfobacteriota</taxon>
        <taxon>Desulfovibrionia</taxon>
        <taxon>Desulfovibrionales</taxon>
        <taxon>Desulfovibrionaceae</taxon>
        <taxon>Nitratidesulfovibrio</taxon>
    </lineage>
</organism>
<evidence type="ECO:0000255" key="1">
    <source>
        <dbReference type="HAMAP-Rule" id="MF_01008"/>
    </source>
</evidence>
<evidence type="ECO:0000255" key="2">
    <source>
        <dbReference type="PROSITE-ProRule" id="PRU01076"/>
    </source>
</evidence>
<feature type="chain" id="PRO_0000108478" description="Transcriptional regulator MraZ">
    <location>
        <begin position="1"/>
        <end position="149"/>
    </location>
</feature>
<feature type="domain" description="SpoVT-AbrB 1" evidence="2">
    <location>
        <begin position="6"/>
        <end position="52"/>
    </location>
</feature>
<feature type="domain" description="SpoVT-AbrB 2" evidence="2">
    <location>
        <begin position="81"/>
        <end position="124"/>
    </location>
</feature>
<comment type="subunit">
    <text evidence="1">Forms oligomers.</text>
</comment>
<comment type="subcellular location">
    <subcellularLocation>
        <location evidence="1">Cytoplasm</location>
        <location evidence="1">Nucleoid</location>
    </subcellularLocation>
</comment>
<comment type="similarity">
    <text evidence="1">Belongs to the MraZ family.</text>
</comment>
<protein>
    <recommendedName>
        <fullName>Transcriptional regulator MraZ</fullName>
    </recommendedName>
</protein>
<name>MRAZ_NITV2</name>
<keyword id="KW-0963">Cytoplasm</keyword>
<keyword id="KW-0238">DNA-binding</keyword>
<keyword id="KW-1185">Reference proteome</keyword>
<keyword id="KW-0677">Repeat</keyword>
<keyword id="KW-0804">Transcription</keyword>
<keyword id="KW-0805">Transcription regulation</keyword>
<sequence>MLFRGRSHRSLDPKGRLMLPPEFRDILLSRSEEGKLVLTSFDGCVVGYPYPDWVEFEDKFNRLKNPSRKMRDFRRLVIGGAEEMTADPQGRVRVSRSHMDYAGLTKDVVLVGQGSRFEIWDQSKFDAIVAQDFDDVTEELAESGIDFCF</sequence>
<proteinExistence type="inferred from homology"/>
<gene>
    <name evidence="1" type="primary">mraZ</name>
    <name type="ordered locus">DVU_2513</name>
</gene>
<dbReference type="EMBL" id="AE017285">
    <property type="protein sequence ID" value="AAS96985.1"/>
    <property type="molecule type" value="Genomic_DNA"/>
</dbReference>
<dbReference type="RefSeq" id="WP_010939783.1">
    <property type="nucleotide sequence ID" value="NC_002937.3"/>
</dbReference>
<dbReference type="RefSeq" id="YP_011725.1">
    <property type="nucleotide sequence ID" value="NC_002937.3"/>
</dbReference>
<dbReference type="SMR" id="Q728T9"/>
<dbReference type="STRING" id="882.DVU_2513"/>
<dbReference type="PaxDb" id="882-DVU_2513"/>
<dbReference type="EnsemblBacteria" id="AAS96985">
    <property type="protein sequence ID" value="AAS96985"/>
    <property type="gene ID" value="DVU_2513"/>
</dbReference>
<dbReference type="KEGG" id="dvu:DVU_2513"/>
<dbReference type="PATRIC" id="fig|882.5.peg.2273"/>
<dbReference type="eggNOG" id="COG2001">
    <property type="taxonomic scope" value="Bacteria"/>
</dbReference>
<dbReference type="HOGENOM" id="CLU_107907_2_2_7"/>
<dbReference type="OrthoDB" id="9807753at2"/>
<dbReference type="PhylomeDB" id="Q728T9"/>
<dbReference type="Proteomes" id="UP000002194">
    <property type="component" value="Chromosome"/>
</dbReference>
<dbReference type="GO" id="GO:0005737">
    <property type="term" value="C:cytoplasm"/>
    <property type="evidence" value="ECO:0007669"/>
    <property type="project" value="UniProtKB-UniRule"/>
</dbReference>
<dbReference type="GO" id="GO:0009295">
    <property type="term" value="C:nucleoid"/>
    <property type="evidence" value="ECO:0007669"/>
    <property type="project" value="UniProtKB-SubCell"/>
</dbReference>
<dbReference type="GO" id="GO:0003700">
    <property type="term" value="F:DNA-binding transcription factor activity"/>
    <property type="evidence" value="ECO:0007669"/>
    <property type="project" value="UniProtKB-UniRule"/>
</dbReference>
<dbReference type="GO" id="GO:0000976">
    <property type="term" value="F:transcription cis-regulatory region binding"/>
    <property type="evidence" value="ECO:0007669"/>
    <property type="project" value="TreeGrafter"/>
</dbReference>
<dbReference type="GO" id="GO:2000143">
    <property type="term" value="P:negative regulation of DNA-templated transcription initiation"/>
    <property type="evidence" value="ECO:0007669"/>
    <property type="project" value="TreeGrafter"/>
</dbReference>
<dbReference type="CDD" id="cd16321">
    <property type="entry name" value="MraZ_C"/>
    <property type="match status" value="1"/>
</dbReference>
<dbReference type="CDD" id="cd16320">
    <property type="entry name" value="MraZ_N"/>
    <property type="match status" value="1"/>
</dbReference>
<dbReference type="Gene3D" id="3.40.1550.20">
    <property type="entry name" value="Transcriptional regulator MraZ domain"/>
    <property type="match status" value="1"/>
</dbReference>
<dbReference type="HAMAP" id="MF_01008">
    <property type="entry name" value="MraZ"/>
    <property type="match status" value="1"/>
</dbReference>
<dbReference type="InterPro" id="IPR003444">
    <property type="entry name" value="MraZ"/>
</dbReference>
<dbReference type="InterPro" id="IPR035644">
    <property type="entry name" value="MraZ_C"/>
</dbReference>
<dbReference type="InterPro" id="IPR020603">
    <property type="entry name" value="MraZ_dom"/>
</dbReference>
<dbReference type="InterPro" id="IPR035642">
    <property type="entry name" value="MraZ_N"/>
</dbReference>
<dbReference type="InterPro" id="IPR038619">
    <property type="entry name" value="MraZ_sf"/>
</dbReference>
<dbReference type="InterPro" id="IPR007159">
    <property type="entry name" value="SpoVT-AbrB_dom"/>
</dbReference>
<dbReference type="InterPro" id="IPR037914">
    <property type="entry name" value="SpoVT-AbrB_sf"/>
</dbReference>
<dbReference type="NCBIfam" id="TIGR00242">
    <property type="entry name" value="division/cell wall cluster transcriptional repressor MraZ"/>
    <property type="match status" value="1"/>
</dbReference>
<dbReference type="PANTHER" id="PTHR34701">
    <property type="entry name" value="TRANSCRIPTIONAL REGULATOR MRAZ"/>
    <property type="match status" value="1"/>
</dbReference>
<dbReference type="PANTHER" id="PTHR34701:SF1">
    <property type="entry name" value="TRANSCRIPTIONAL REGULATOR MRAZ"/>
    <property type="match status" value="1"/>
</dbReference>
<dbReference type="Pfam" id="PF02381">
    <property type="entry name" value="MraZ"/>
    <property type="match status" value="2"/>
</dbReference>
<dbReference type="SUPFAM" id="SSF89447">
    <property type="entry name" value="AbrB/MazE/MraZ-like"/>
    <property type="match status" value="1"/>
</dbReference>
<dbReference type="PROSITE" id="PS51740">
    <property type="entry name" value="SPOVT_ABRB"/>
    <property type="match status" value="2"/>
</dbReference>
<accession>Q728T9</accession>
<reference key="1">
    <citation type="journal article" date="2004" name="Nat. Biotechnol.">
        <title>The genome sequence of the anaerobic, sulfate-reducing bacterium Desulfovibrio vulgaris Hildenborough.</title>
        <authorList>
            <person name="Heidelberg J.F."/>
            <person name="Seshadri R."/>
            <person name="Haveman S.A."/>
            <person name="Hemme C.L."/>
            <person name="Paulsen I.T."/>
            <person name="Kolonay J.F."/>
            <person name="Eisen J.A."/>
            <person name="Ward N.L."/>
            <person name="Methe B.A."/>
            <person name="Brinkac L.M."/>
            <person name="Daugherty S.C."/>
            <person name="DeBoy R.T."/>
            <person name="Dodson R.J."/>
            <person name="Durkin A.S."/>
            <person name="Madupu R."/>
            <person name="Nelson W.C."/>
            <person name="Sullivan S.A."/>
            <person name="Fouts D.E."/>
            <person name="Haft D.H."/>
            <person name="Selengut J."/>
            <person name="Peterson J.D."/>
            <person name="Davidsen T.M."/>
            <person name="Zafar N."/>
            <person name="Zhou L."/>
            <person name="Radune D."/>
            <person name="Dimitrov G."/>
            <person name="Hance M."/>
            <person name="Tran K."/>
            <person name="Khouri H.M."/>
            <person name="Gill J."/>
            <person name="Utterback T.R."/>
            <person name="Feldblyum T.V."/>
            <person name="Wall J.D."/>
            <person name="Voordouw G."/>
            <person name="Fraser C.M."/>
        </authorList>
    </citation>
    <scope>NUCLEOTIDE SEQUENCE [LARGE SCALE GENOMIC DNA]</scope>
    <source>
        <strain>ATCC 29579 / DSM 644 / CCUG 34227 / NCIMB 8303 / VKM B-1760 / Hildenborough</strain>
    </source>
</reference>